<dbReference type="EC" id="1.14.14.14" evidence="2"/>
<dbReference type="EMBL" id="D00659">
    <property type="protein sequence ID" value="BAA00551.1"/>
    <property type="molecule type" value="mRNA"/>
</dbReference>
<dbReference type="CCDS" id="CCDS23187.1"/>
<dbReference type="PIR" id="S13912">
    <property type="entry name" value="S13912"/>
</dbReference>
<dbReference type="RefSeq" id="NP_001335100.1">
    <property type="nucleotide sequence ID" value="NM_001348171.1"/>
</dbReference>
<dbReference type="RefSeq" id="NP_001335101.1">
    <property type="nucleotide sequence ID" value="NM_001348172.1"/>
</dbReference>
<dbReference type="RefSeq" id="NP_001335102.1">
    <property type="nucleotide sequence ID" value="NM_001348173.1"/>
</dbReference>
<dbReference type="RefSeq" id="NP_031836.1">
    <property type="nucleotide sequence ID" value="NM_007810.4"/>
</dbReference>
<dbReference type="SMR" id="P28649"/>
<dbReference type="BioGRID" id="199000">
    <property type="interactions" value="1"/>
</dbReference>
<dbReference type="FunCoup" id="P28649">
    <property type="interactions" value="171"/>
</dbReference>
<dbReference type="IntAct" id="P28649">
    <property type="interactions" value="1"/>
</dbReference>
<dbReference type="STRING" id="10090.ENSMUSP00000034811"/>
<dbReference type="GlyGen" id="P28649">
    <property type="glycosylation" value="1 site"/>
</dbReference>
<dbReference type="iPTMnet" id="P28649"/>
<dbReference type="PhosphoSitePlus" id="P28649"/>
<dbReference type="PaxDb" id="10090-ENSMUSP00000034811"/>
<dbReference type="ProteomicsDB" id="285256"/>
<dbReference type="Antibodypedia" id="4371">
    <property type="antibodies" value="651 antibodies from 40 providers"/>
</dbReference>
<dbReference type="Ensembl" id="ENSMUST00000034811.8">
    <property type="protein sequence ID" value="ENSMUSP00000034811.8"/>
    <property type="gene ID" value="ENSMUSG00000032274.10"/>
</dbReference>
<dbReference type="GeneID" id="13075"/>
<dbReference type="KEGG" id="mmu:13075"/>
<dbReference type="UCSC" id="uc009pmu.1">
    <property type="organism name" value="mouse"/>
</dbReference>
<dbReference type="AGR" id="MGI:88587"/>
<dbReference type="CTD" id="1588"/>
<dbReference type="MGI" id="MGI:88587">
    <property type="gene designation" value="Cyp19a1"/>
</dbReference>
<dbReference type="VEuPathDB" id="HostDB:ENSMUSG00000032274"/>
<dbReference type="eggNOG" id="KOG0157">
    <property type="taxonomic scope" value="Eukaryota"/>
</dbReference>
<dbReference type="GeneTree" id="ENSGT00840000129915"/>
<dbReference type="HOGENOM" id="CLU_041874_0_0_1"/>
<dbReference type="InParanoid" id="P28649"/>
<dbReference type="OMA" id="LMRCIML"/>
<dbReference type="OrthoDB" id="1470350at2759"/>
<dbReference type="PhylomeDB" id="P28649"/>
<dbReference type="TreeFam" id="TF352039"/>
<dbReference type="BRENDA" id="1.14.14.14">
    <property type="organism ID" value="3474"/>
</dbReference>
<dbReference type="Reactome" id="R-MMU-193144">
    <property type="pathway name" value="Estrogen biosynthesis"/>
</dbReference>
<dbReference type="Reactome" id="R-MMU-211976">
    <property type="pathway name" value="Endogenous sterols"/>
</dbReference>
<dbReference type="BioGRID-ORCS" id="13075">
    <property type="hits" value="1 hit in 81 CRISPR screens"/>
</dbReference>
<dbReference type="PRO" id="PR:P28649"/>
<dbReference type="Proteomes" id="UP000000589">
    <property type="component" value="Chromosome 9"/>
</dbReference>
<dbReference type="RNAct" id="P28649">
    <property type="molecule type" value="protein"/>
</dbReference>
<dbReference type="Bgee" id="ENSMUSG00000032274">
    <property type="expression patterns" value="Expressed in spermatocyte and 31 other cell types or tissues"/>
</dbReference>
<dbReference type="ExpressionAtlas" id="P28649">
    <property type="expression patterns" value="baseline and differential"/>
</dbReference>
<dbReference type="GO" id="GO:0005789">
    <property type="term" value="C:endoplasmic reticulum membrane"/>
    <property type="evidence" value="ECO:0007669"/>
    <property type="project" value="UniProtKB-SubCell"/>
</dbReference>
<dbReference type="GO" id="GO:0070330">
    <property type="term" value="F:aromatase activity"/>
    <property type="evidence" value="ECO:0000250"/>
    <property type="project" value="UniProtKB"/>
</dbReference>
<dbReference type="GO" id="GO:0101021">
    <property type="term" value="F:estrogen 2-hydroxylase activity"/>
    <property type="evidence" value="ECO:0007669"/>
    <property type="project" value="RHEA"/>
</dbReference>
<dbReference type="GO" id="GO:0020037">
    <property type="term" value="F:heme binding"/>
    <property type="evidence" value="ECO:0000250"/>
    <property type="project" value="UniProtKB"/>
</dbReference>
<dbReference type="GO" id="GO:0005506">
    <property type="term" value="F:iron ion binding"/>
    <property type="evidence" value="ECO:0007669"/>
    <property type="project" value="InterPro"/>
</dbReference>
<dbReference type="GO" id="GO:0016712">
    <property type="term" value="F:oxidoreductase activity, acting on paired donors, with incorporation or reduction of molecular oxygen, reduced flavin or flavoprotein as one donor, and incorporation of one atom of oxygen"/>
    <property type="evidence" value="ECO:0000314"/>
    <property type="project" value="MGI"/>
</dbReference>
<dbReference type="GO" id="GO:0006710">
    <property type="term" value="P:androgen catabolic process"/>
    <property type="evidence" value="ECO:0007669"/>
    <property type="project" value="Ensembl"/>
</dbReference>
<dbReference type="GO" id="GO:0008209">
    <property type="term" value="P:androgen metabolic process"/>
    <property type="evidence" value="ECO:0000315"/>
    <property type="project" value="MGI"/>
</dbReference>
<dbReference type="GO" id="GO:0030540">
    <property type="term" value="P:female genitalia development"/>
    <property type="evidence" value="ECO:0000315"/>
    <property type="project" value="MGI"/>
</dbReference>
<dbReference type="GO" id="GO:0008585">
    <property type="term" value="P:female gonad development"/>
    <property type="evidence" value="ECO:0000315"/>
    <property type="project" value="MGI"/>
</dbReference>
<dbReference type="GO" id="GO:0030879">
    <property type="term" value="P:mammary gland development"/>
    <property type="evidence" value="ECO:0000315"/>
    <property type="project" value="MGI"/>
</dbReference>
<dbReference type="GO" id="GO:0002677">
    <property type="term" value="P:negative regulation of chronic inflammatory response"/>
    <property type="evidence" value="ECO:0000315"/>
    <property type="project" value="MGI"/>
</dbReference>
<dbReference type="GO" id="GO:0010760">
    <property type="term" value="P:negative regulation of macrophage chemotaxis"/>
    <property type="evidence" value="ECO:0000315"/>
    <property type="project" value="MGI"/>
</dbReference>
<dbReference type="GO" id="GO:2000866">
    <property type="term" value="P:positive regulation of estradiol secretion"/>
    <property type="evidence" value="ECO:0007669"/>
    <property type="project" value="Ensembl"/>
</dbReference>
<dbReference type="GO" id="GO:0060736">
    <property type="term" value="P:prostate gland growth"/>
    <property type="evidence" value="ECO:0000315"/>
    <property type="project" value="MGI"/>
</dbReference>
<dbReference type="GO" id="GO:0061370">
    <property type="term" value="P:testosterone biosynthetic process"/>
    <property type="evidence" value="ECO:0000315"/>
    <property type="project" value="MGI"/>
</dbReference>
<dbReference type="GO" id="GO:0060065">
    <property type="term" value="P:uterus development"/>
    <property type="evidence" value="ECO:0000315"/>
    <property type="project" value="MGI"/>
</dbReference>
<dbReference type="CDD" id="cd20616">
    <property type="entry name" value="CYP19A1"/>
    <property type="match status" value="1"/>
</dbReference>
<dbReference type="FunFam" id="1.10.630.10:FF:000032">
    <property type="entry name" value="Cytochrome P450 aromatase"/>
    <property type="match status" value="1"/>
</dbReference>
<dbReference type="Gene3D" id="1.10.630.10">
    <property type="entry name" value="Cytochrome P450"/>
    <property type="match status" value="1"/>
</dbReference>
<dbReference type="InterPro" id="IPR001128">
    <property type="entry name" value="Cyt_P450"/>
</dbReference>
<dbReference type="InterPro" id="IPR017972">
    <property type="entry name" value="Cyt_P450_CS"/>
</dbReference>
<dbReference type="InterPro" id="IPR002401">
    <property type="entry name" value="Cyt_P450_E_grp-I"/>
</dbReference>
<dbReference type="InterPro" id="IPR036396">
    <property type="entry name" value="Cyt_P450_sf"/>
</dbReference>
<dbReference type="InterPro" id="IPR050196">
    <property type="entry name" value="Cytochrome_P450_Monoox"/>
</dbReference>
<dbReference type="PANTHER" id="PTHR24291:SF43">
    <property type="entry name" value="AROMATASE"/>
    <property type="match status" value="1"/>
</dbReference>
<dbReference type="PANTHER" id="PTHR24291">
    <property type="entry name" value="CYTOCHROME P450 FAMILY 4"/>
    <property type="match status" value="1"/>
</dbReference>
<dbReference type="Pfam" id="PF00067">
    <property type="entry name" value="p450"/>
    <property type="match status" value="1"/>
</dbReference>
<dbReference type="PRINTS" id="PR00463">
    <property type="entry name" value="EP450I"/>
</dbReference>
<dbReference type="PRINTS" id="PR00385">
    <property type="entry name" value="P450"/>
</dbReference>
<dbReference type="SUPFAM" id="SSF48264">
    <property type="entry name" value="Cytochrome P450"/>
    <property type="match status" value="1"/>
</dbReference>
<dbReference type="PROSITE" id="PS00086">
    <property type="entry name" value="CYTOCHROME_P450"/>
    <property type="match status" value="1"/>
</dbReference>
<gene>
    <name type="primary">Cyp19a1</name>
    <name type="synonym">Arom</name>
    <name type="synonym">Cyp19</name>
</gene>
<evidence type="ECO:0000250" key="1"/>
<evidence type="ECO:0000250" key="2">
    <source>
        <dbReference type="UniProtKB" id="P11511"/>
    </source>
</evidence>
<evidence type="ECO:0000255" key="3"/>
<evidence type="ECO:0000303" key="4">
    <source>
    </source>
</evidence>
<evidence type="ECO:0000305" key="5"/>
<sequence length="503" mass="58015">MFLEMLNPMQYNVTIMVPETVTVSAMPLLLIMGLLLLIWNCESSSSIPGPGYCLGIGPLISHGRFLWMGIGSACNYYNKMYGEFMRVWISGEETLIISKSSSMFHVMKHSHYISRFGSKRGLQCIGMHENGIIFNNNPSLWRTIRPFFMKALTGPGLVRMVEVCVESIKQHLDRLGEVTDTSGYVDVLTLMRHIMLDTSNMLFLGIPLDESAIVKKIQGYFNAWQALLIKPNIFFKISWLYRKYERSVKDLKDEIAVLVEKKRHKVSTAEKLEDCMDFATDLIFAERRGDLTKENVNQCILEMLIAAPDTMSVTLYFMLLLVAEYPEVEAAILKEIHTVVGDRDIKIEDIQNLKVVENFINESMRYQPVVDLVMRRALEDDVIDGYPVKKGTNIILNIGRMHRLEYFPKPNEFTLENFEKNVPYRYFQPFGFGPRGCAGKYIAMVMMKVVLVTLLRRFQVKTLQKRCIENIPKKNDLSLHPNEDRHLVEIIFSPRNSDKYLQQ</sequence>
<organism>
    <name type="scientific">Mus musculus</name>
    <name type="common">Mouse</name>
    <dbReference type="NCBI Taxonomy" id="10090"/>
    <lineage>
        <taxon>Eukaryota</taxon>
        <taxon>Metazoa</taxon>
        <taxon>Chordata</taxon>
        <taxon>Craniata</taxon>
        <taxon>Vertebrata</taxon>
        <taxon>Euteleostomi</taxon>
        <taxon>Mammalia</taxon>
        <taxon>Eutheria</taxon>
        <taxon>Euarchontoglires</taxon>
        <taxon>Glires</taxon>
        <taxon>Rodentia</taxon>
        <taxon>Myomorpha</taxon>
        <taxon>Muroidea</taxon>
        <taxon>Muridae</taxon>
        <taxon>Murinae</taxon>
        <taxon>Mus</taxon>
        <taxon>Mus</taxon>
    </lineage>
</organism>
<accession>P28649</accession>
<comment type="function">
    <text evidence="2">A cytochrome P450 monooxygenase that catalyzes the conversion of C19 androgens, androst-4-ene-3,17-dione (androstenedione) and testosterone to the C18 estrogens, estrone and estradiol, respectively. Catalyzes three successive oxidations of C19 androgens: two conventional oxidations at C19 yielding 19-hydroxy and 19-oxo/19-aldehyde derivatives, followed by a third oxidative aromatization step that involves C1-beta hydrogen abstraction combined with cleavage of the C10-C19 bond to yield a phenolic A ring and formic acid. Alternatively, the third oxidative reaction yields a 19-norsteroid and formic acid. Converts dihydrotestosterone to delta1,10-dehydro 19-nordihydrotestosterone and may play a role in homeostasis of this potent androgen. Also displays 2-hydroxylase activity toward estrone. Mechanistically, uses molecular oxygen inserting one oxygen atom into a substrate, and reducing the second into a water molecule, with two electrons provided by NADPH via cytochrome P450 reductase (CPR; NADPH-ferrihemoprotein reductase).</text>
</comment>
<comment type="catalytic activity">
    <reaction evidence="2">
        <text>testosterone + 3 reduced [NADPH--hemoprotein reductase] + 3 O2 = 17beta-estradiol + formate + 3 oxidized [NADPH--hemoprotein reductase] + 4 H2O + 4 H(+)</text>
        <dbReference type="Rhea" id="RHEA:38191"/>
        <dbReference type="Rhea" id="RHEA-COMP:11964"/>
        <dbReference type="Rhea" id="RHEA-COMP:11965"/>
        <dbReference type="ChEBI" id="CHEBI:15377"/>
        <dbReference type="ChEBI" id="CHEBI:15378"/>
        <dbReference type="ChEBI" id="CHEBI:15379"/>
        <dbReference type="ChEBI" id="CHEBI:15740"/>
        <dbReference type="ChEBI" id="CHEBI:16469"/>
        <dbReference type="ChEBI" id="CHEBI:17347"/>
        <dbReference type="ChEBI" id="CHEBI:57618"/>
        <dbReference type="ChEBI" id="CHEBI:58210"/>
        <dbReference type="EC" id="1.14.14.14"/>
    </reaction>
    <physiologicalReaction direction="left-to-right" evidence="2">
        <dbReference type="Rhea" id="RHEA:38192"/>
    </physiologicalReaction>
</comment>
<comment type="catalytic activity">
    <reaction evidence="2">
        <text>androst-4-ene-3,17-dione + 3 reduced [NADPH--hemoprotein reductase] + 3 O2 = estrone + formate + 3 oxidized [NADPH--hemoprotein reductase] + 4 H2O + 4 H(+)</text>
        <dbReference type="Rhea" id="RHEA:38195"/>
        <dbReference type="Rhea" id="RHEA-COMP:11964"/>
        <dbReference type="Rhea" id="RHEA-COMP:11965"/>
        <dbReference type="ChEBI" id="CHEBI:15377"/>
        <dbReference type="ChEBI" id="CHEBI:15378"/>
        <dbReference type="ChEBI" id="CHEBI:15379"/>
        <dbReference type="ChEBI" id="CHEBI:15740"/>
        <dbReference type="ChEBI" id="CHEBI:16422"/>
        <dbReference type="ChEBI" id="CHEBI:17263"/>
        <dbReference type="ChEBI" id="CHEBI:57618"/>
        <dbReference type="ChEBI" id="CHEBI:58210"/>
        <dbReference type="EC" id="1.14.14.14"/>
    </reaction>
    <physiologicalReaction direction="left-to-right" evidence="2">
        <dbReference type="Rhea" id="RHEA:38196"/>
    </physiologicalReaction>
</comment>
<comment type="catalytic activity">
    <reaction evidence="2">
        <text>androst-4-ene-3,17-dione + reduced [NADPH--hemoprotein reductase] + O2 = 19-hydroxyandrost-4-ene-3,17-dione + oxidized [NADPH--hemoprotein reductase] + H2O + H(+)</text>
        <dbReference type="Rhea" id="RHEA:38199"/>
        <dbReference type="Rhea" id="RHEA-COMP:11964"/>
        <dbReference type="Rhea" id="RHEA-COMP:11965"/>
        <dbReference type="ChEBI" id="CHEBI:15377"/>
        <dbReference type="ChEBI" id="CHEBI:15378"/>
        <dbReference type="ChEBI" id="CHEBI:15379"/>
        <dbReference type="ChEBI" id="CHEBI:16422"/>
        <dbReference type="ChEBI" id="CHEBI:27576"/>
        <dbReference type="ChEBI" id="CHEBI:57618"/>
        <dbReference type="ChEBI" id="CHEBI:58210"/>
    </reaction>
    <physiologicalReaction direction="left-to-right" evidence="2">
        <dbReference type="Rhea" id="RHEA:38200"/>
    </physiologicalReaction>
</comment>
<comment type="catalytic activity">
    <reaction evidence="2">
        <text>19-hydroxyandrost-4-ene-3,17-dione + reduced [NADPH--hemoprotein reductase] + O2 = 19-oxo-androst-4-ene-3,17-dione + oxidized [NADPH--hemoprotein reductase] + 2 H2O + H(+)</text>
        <dbReference type="Rhea" id="RHEA:38203"/>
        <dbReference type="Rhea" id="RHEA-COMP:11964"/>
        <dbReference type="Rhea" id="RHEA-COMP:11965"/>
        <dbReference type="ChEBI" id="CHEBI:799"/>
        <dbReference type="ChEBI" id="CHEBI:15377"/>
        <dbReference type="ChEBI" id="CHEBI:15378"/>
        <dbReference type="ChEBI" id="CHEBI:15379"/>
        <dbReference type="ChEBI" id="CHEBI:27576"/>
        <dbReference type="ChEBI" id="CHEBI:57618"/>
        <dbReference type="ChEBI" id="CHEBI:58210"/>
    </reaction>
    <physiologicalReaction direction="left-to-right" evidence="2">
        <dbReference type="Rhea" id="RHEA:38204"/>
    </physiologicalReaction>
</comment>
<comment type="catalytic activity">
    <reaction evidence="2">
        <text>19-oxo-androst-4-ene-3,17-dione + reduced [NADPH--hemoprotein reductase] + O2 = estrone + formate + oxidized [NADPH--hemoprotein reductase] + H2O + 2 H(+)</text>
        <dbReference type="Rhea" id="RHEA:38207"/>
        <dbReference type="Rhea" id="RHEA-COMP:11964"/>
        <dbReference type="Rhea" id="RHEA-COMP:11965"/>
        <dbReference type="ChEBI" id="CHEBI:799"/>
        <dbReference type="ChEBI" id="CHEBI:15377"/>
        <dbReference type="ChEBI" id="CHEBI:15378"/>
        <dbReference type="ChEBI" id="CHEBI:15379"/>
        <dbReference type="ChEBI" id="CHEBI:15740"/>
        <dbReference type="ChEBI" id="CHEBI:17263"/>
        <dbReference type="ChEBI" id="CHEBI:57618"/>
        <dbReference type="ChEBI" id="CHEBI:58210"/>
    </reaction>
    <physiologicalReaction direction="left-to-right" evidence="2">
        <dbReference type="Rhea" id="RHEA:38208"/>
    </physiologicalReaction>
</comment>
<comment type="catalytic activity">
    <reaction evidence="2">
        <text>estrone + reduced [NADPH--hemoprotein reductase] + O2 = 2-hydroxyestrone + oxidized [NADPH--hemoprotein reductase] + H2O + H(+)</text>
        <dbReference type="Rhea" id="RHEA:47208"/>
        <dbReference type="Rhea" id="RHEA-COMP:11964"/>
        <dbReference type="Rhea" id="RHEA-COMP:11965"/>
        <dbReference type="ChEBI" id="CHEBI:1156"/>
        <dbReference type="ChEBI" id="CHEBI:15377"/>
        <dbReference type="ChEBI" id="CHEBI:15378"/>
        <dbReference type="ChEBI" id="CHEBI:15379"/>
        <dbReference type="ChEBI" id="CHEBI:17263"/>
        <dbReference type="ChEBI" id="CHEBI:57618"/>
        <dbReference type="ChEBI" id="CHEBI:58210"/>
    </reaction>
    <physiologicalReaction direction="left-to-right" evidence="2">
        <dbReference type="Rhea" id="RHEA:47209"/>
    </physiologicalReaction>
</comment>
<comment type="catalytic activity">
    <reaction evidence="2">
        <text>17beta-hydroxy-5alpha-androstan-3-one + reduced [NADPH--hemoprotein reductase] + O2 = 17beta,19-dihydroxy-3-oxo-5alpha-androstanone + oxidized [NADPH--hemoprotein reductase] + H2O + H(+)</text>
        <dbReference type="Rhea" id="RHEA:53200"/>
        <dbReference type="Rhea" id="RHEA-COMP:11964"/>
        <dbReference type="Rhea" id="RHEA-COMP:11965"/>
        <dbReference type="ChEBI" id="CHEBI:15377"/>
        <dbReference type="ChEBI" id="CHEBI:15378"/>
        <dbReference type="ChEBI" id="CHEBI:15379"/>
        <dbReference type="ChEBI" id="CHEBI:16330"/>
        <dbReference type="ChEBI" id="CHEBI:57618"/>
        <dbReference type="ChEBI" id="CHEBI:58210"/>
        <dbReference type="ChEBI" id="CHEBI:137031"/>
    </reaction>
    <physiologicalReaction direction="left-to-right" evidence="2">
        <dbReference type="Rhea" id="RHEA:53201"/>
    </physiologicalReaction>
</comment>
<comment type="catalytic activity">
    <reaction evidence="2">
        <text>17beta,19-dihydroxy-3-oxo-5alpha-androstanone + reduced [NADPH--hemoprotein reductase] + O2 = 17beta-hydroxy-3,19-dioxo-5alpha-androstanone + oxidized [NADPH--hemoprotein reductase] + 2 H2O + H(+)</text>
        <dbReference type="Rhea" id="RHEA:53204"/>
        <dbReference type="Rhea" id="RHEA-COMP:11964"/>
        <dbReference type="Rhea" id="RHEA-COMP:11965"/>
        <dbReference type="ChEBI" id="CHEBI:15377"/>
        <dbReference type="ChEBI" id="CHEBI:15378"/>
        <dbReference type="ChEBI" id="CHEBI:15379"/>
        <dbReference type="ChEBI" id="CHEBI:57618"/>
        <dbReference type="ChEBI" id="CHEBI:58210"/>
        <dbReference type="ChEBI" id="CHEBI:137031"/>
        <dbReference type="ChEBI" id="CHEBI:137032"/>
    </reaction>
    <physiologicalReaction direction="left-to-right" evidence="2">
        <dbReference type="Rhea" id="RHEA:53205"/>
    </physiologicalReaction>
</comment>
<comment type="catalytic activity">
    <reaction evidence="2">
        <text>17beta-hydroxy-3,19-dioxo-5alpha-androstanone + reduced [NADPH--hemoprotein reductase] + O2 = 17beta-hydroxy-3-oxo-19-nor-5alpha-androst-1-ene + formate + oxidized [NADPH--hemoprotein reductase] + H2O + 2 H(+)</text>
        <dbReference type="Rhea" id="RHEA:53276"/>
        <dbReference type="Rhea" id="RHEA-COMP:11964"/>
        <dbReference type="Rhea" id="RHEA-COMP:11965"/>
        <dbReference type="ChEBI" id="CHEBI:15377"/>
        <dbReference type="ChEBI" id="CHEBI:15378"/>
        <dbReference type="ChEBI" id="CHEBI:15379"/>
        <dbReference type="ChEBI" id="CHEBI:15740"/>
        <dbReference type="ChEBI" id="CHEBI:57618"/>
        <dbReference type="ChEBI" id="CHEBI:58210"/>
        <dbReference type="ChEBI" id="CHEBI:137032"/>
        <dbReference type="ChEBI" id="CHEBI:137110"/>
    </reaction>
    <physiologicalReaction direction="left-to-right" evidence="2">
        <dbReference type="Rhea" id="RHEA:53277"/>
    </physiologicalReaction>
</comment>
<comment type="cofactor">
    <cofactor evidence="2">
        <name>heme</name>
        <dbReference type="ChEBI" id="CHEBI:30413"/>
    </cofactor>
</comment>
<comment type="pathway">
    <text evidence="2">Steroid hormone biosynthesis.</text>
</comment>
<comment type="subcellular location">
    <subcellularLocation>
        <location evidence="2">Endoplasmic reticulum membrane</location>
        <topology evidence="5">Single-pass membrane protein</topology>
    </subcellularLocation>
    <subcellularLocation>
        <location evidence="2">Microsome membrane</location>
        <topology evidence="5">Single-pass membrane protein</topology>
    </subcellularLocation>
</comment>
<comment type="similarity">
    <text evidence="5">Belongs to the cytochrome P450 family.</text>
</comment>
<keyword id="KW-0256">Endoplasmic reticulum</keyword>
<keyword id="KW-0349">Heme</keyword>
<keyword id="KW-0408">Iron</keyword>
<keyword id="KW-0443">Lipid metabolism</keyword>
<keyword id="KW-0472">Membrane</keyword>
<keyword id="KW-0479">Metal-binding</keyword>
<keyword id="KW-0492">Microsome</keyword>
<keyword id="KW-0503">Monooxygenase</keyword>
<keyword id="KW-0560">Oxidoreductase</keyword>
<keyword id="KW-1185">Reference proteome</keyword>
<keyword id="KW-0812">Transmembrane</keyword>
<keyword id="KW-1133">Transmembrane helix</keyword>
<proteinExistence type="evidence at transcript level"/>
<reference key="1">
    <citation type="journal article" date="1991" name="Arch. Biochem. Biophys.">
        <title>Isolation of a full-length cDNA encoding mouse aromatase P450.</title>
        <authorList>
            <person name="Terashima M."/>
            <person name="Toda K."/>
            <person name="Kawamoto T."/>
            <person name="Kuribayashi I."/>
            <person name="Ogawa Y."/>
            <person name="Maeda T."/>
            <person name="Shizuta Y."/>
        </authorList>
    </citation>
    <scope>NUCLEOTIDE SEQUENCE [MRNA]</scope>
    <source>
        <tissue>Ovary</tissue>
    </source>
</reference>
<name>CP19A_MOUSE</name>
<protein>
    <recommendedName>
        <fullName evidence="4">Aromatase</fullName>
        <ecNumber evidence="2">1.14.14.14</ecNumber>
    </recommendedName>
    <alternativeName>
        <fullName>CYPXIX</fullName>
    </alternativeName>
    <alternativeName>
        <fullName>Cytochrome P-450AROM</fullName>
    </alternativeName>
    <alternativeName>
        <fullName>Cytochrome P450 19A1</fullName>
    </alternativeName>
    <alternativeName>
        <fullName>Estrogen synthase</fullName>
    </alternativeName>
</protein>
<feature type="chain" id="PRO_0000051957" description="Aromatase">
    <location>
        <begin position="1"/>
        <end position="503"/>
    </location>
</feature>
<feature type="transmembrane region" description="Helical" evidence="3">
    <location>
        <begin position="21"/>
        <end position="41"/>
    </location>
</feature>
<feature type="binding site" evidence="1">
    <location>
        <position position="309"/>
    </location>
    <ligand>
        <name>substrate</name>
    </ligand>
</feature>
<feature type="binding site" evidence="1">
    <location>
        <position position="374"/>
    </location>
    <ligand>
        <name>substrate</name>
    </ligand>
</feature>
<feature type="binding site" description="axial binding residue" evidence="1">
    <location>
        <position position="437"/>
    </location>
    <ligand>
        <name>heme</name>
        <dbReference type="ChEBI" id="CHEBI:30413"/>
    </ligand>
    <ligandPart>
        <name>Fe</name>
        <dbReference type="ChEBI" id="CHEBI:18248"/>
    </ligandPart>
</feature>